<sequence>MSSSFLSRPLVSVYVFAMVTMQLLFMQSVLSLNQTNAYLNHICIKGEGIVKGSSYEGSVKSVIDHMSTYLDYGFVNGAGSDGPTNIYAKLQCRADASESKCRSCLATAFSEIRKKCPNYKGRIIWYDNCLLDISSIYTLAEIDYRHIFNMYNAKDVSSDTMAFNKNTRALLYALKEKAISKKELPYRRDYLYSAGEESLGKKKVYAMVQCTKDLSAKNCSVCLSYILSKLPKCCKGKQGGSVLSPSCNFRYELYPFVKT</sequence>
<name>CRR25_ARATH</name>
<protein>
    <recommendedName>
        <fullName>Putative cysteine-rich repeat secretory protein 25</fullName>
    </recommendedName>
</protein>
<comment type="subcellular location">
    <subcellularLocation>
        <location evidence="3">Secreted</location>
    </subcellularLocation>
</comment>
<comment type="similarity">
    <text evidence="3">Belongs to the cysteine-rich repeat secretory protein family.</text>
</comment>
<comment type="caution">
    <text evidence="3">Could be the product of a pseudogene.</text>
</comment>
<comment type="sequence caution" evidence="3">
    <conflict type="erroneous gene model prediction">
        <sequence resource="EMBL-CDS" id="BAB01378"/>
    </conflict>
</comment>
<comment type="sequence caution" evidence="3">
    <conflict type="erroneous termination">
        <sequence resource="EMBL-CDS" id="BAB01378"/>
    </conflict>
    <text>Truncated C-terminus.</text>
</comment>
<dbReference type="EMBL" id="AB028622">
    <property type="protein sequence ID" value="BAB01378.1"/>
    <property type="status" value="ALT_SEQ"/>
    <property type="molecule type" value="Genomic_DNA"/>
</dbReference>
<dbReference type="EMBL" id="CP002686">
    <property type="status" value="NOT_ANNOTATED_CDS"/>
    <property type="molecule type" value="Genomic_DNA"/>
</dbReference>
<dbReference type="SMR" id="Q9LRL2"/>
<dbReference type="PeptideAtlas" id="Q9LRL2"/>
<dbReference type="Araport" id="AT3G21965"/>
<dbReference type="TAIR" id="AT3G21965"/>
<dbReference type="InParanoid" id="Q9LRL2"/>
<dbReference type="Proteomes" id="UP000006548">
    <property type="component" value="Chromosome 3"/>
</dbReference>
<dbReference type="ExpressionAtlas" id="Q9LRL2">
    <property type="expression patterns" value="baseline and differential"/>
</dbReference>
<dbReference type="GO" id="GO:0005576">
    <property type="term" value="C:extracellular region"/>
    <property type="evidence" value="ECO:0007669"/>
    <property type="project" value="UniProtKB-SubCell"/>
</dbReference>
<dbReference type="CDD" id="cd23509">
    <property type="entry name" value="Gnk2-like"/>
    <property type="match status" value="2"/>
</dbReference>
<dbReference type="FunFam" id="3.30.430.20:FF:000007">
    <property type="entry name" value="Cysteine-rich receptor-like protein kinase 11"/>
    <property type="match status" value="1"/>
</dbReference>
<dbReference type="Gene3D" id="3.30.430.20">
    <property type="entry name" value="Gnk2 domain, C-X8-C-X2-C motif"/>
    <property type="match status" value="2"/>
</dbReference>
<dbReference type="InterPro" id="IPR050581">
    <property type="entry name" value="CRR_secretory_protein"/>
</dbReference>
<dbReference type="InterPro" id="IPR002902">
    <property type="entry name" value="GNK2"/>
</dbReference>
<dbReference type="InterPro" id="IPR038408">
    <property type="entry name" value="GNK2_sf"/>
</dbReference>
<dbReference type="PANTHER" id="PTHR32411:SF54">
    <property type="entry name" value="CYSTEINE-RICH REPEAT SECRETORY PROTEIN 29-RELATED"/>
    <property type="match status" value="1"/>
</dbReference>
<dbReference type="PANTHER" id="PTHR32411">
    <property type="entry name" value="CYSTEINE-RICH REPEAT SECRETORY PROTEIN 38-RELATED"/>
    <property type="match status" value="1"/>
</dbReference>
<dbReference type="Pfam" id="PF01657">
    <property type="entry name" value="Stress-antifung"/>
    <property type="match status" value="2"/>
</dbReference>
<dbReference type="PROSITE" id="PS51473">
    <property type="entry name" value="GNK2"/>
    <property type="match status" value="2"/>
</dbReference>
<feature type="signal peptide" evidence="1">
    <location>
        <begin position="1"/>
        <end position="31"/>
    </location>
</feature>
<feature type="chain" id="PRO_0000296153" description="Putative cysteine-rich repeat secretory protein 25">
    <location>
        <begin position="32"/>
        <end position="259"/>
    </location>
</feature>
<feature type="domain" description="Gnk2-homologous 1" evidence="2">
    <location>
        <begin position="37"/>
        <end position="138"/>
    </location>
</feature>
<feature type="domain" description="Gnk2-homologous 2" evidence="2">
    <location>
        <begin position="144"/>
        <end position="256"/>
    </location>
</feature>
<organism>
    <name type="scientific">Arabidopsis thaliana</name>
    <name type="common">Mouse-ear cress</name>
    <dbReference type="NCBI Taxonomy" id="3702"/>
    <lineage>
        <taxon>Eukaryota</taxon>
        <taxon>Viridiplantae</taxon>
        <taxon>Streptophyta</taxon>
        <taxon>Embryophyta</taxon>
        <taxon>Tracheophyta</taxon>
        <taxon>Spermatophyta</taxon>
        <taxon>Magnoliopsida</taxon>
        <taxon>eudicotyledons</taxon>
        <taxon>Gunneridae</taxon>
        <taxon>Pentapetalae</taxon>
        <taxon>rosids</taxon>
        <taxon>malvids</taxon>
        <taxon>Brassicales</taxon>
        <taxon>Brassicaceae</taxon>
        <taxon>Camelineae</taxon>
        <taxon>Arabidopsis</taxon>
    </lineage>
</organism>
<evidence type="ECO:0000255" key="1"/>
<evidence type="ECO:0000255" key="2">
    <source>
        <dbReference type="PROSITE-ProRule" id="PRU00806"/>
    </source>
</evidence>
<evidence type="ECO:0000305" key="3"/>
<proteinExistence type="uncertain"/>
<keyword id="KW-1185">Reference proteome</keyword>
<keyword id="KW-0677">Repeat</keyword>
<keyword id="KW-0964">Secreted</keyword>
<keyword id="KW-0732">Signal</keyword>
<reference key="1">
    <citation type="journal article" date="2000" name="DNA Res.">
        <title>Structural analysis of Arabidopsis thaliana chromosome 3. I. Sequence features of the regions of 4,504,864 bp covered by sixty P1 and TAC clones.</title>
        <authorList>
            <person name="Sato S."/>
            <person name="Nakamura Y."/>
            <person name="Kaneko T."/>
            <person name="Katoh T."/>
            <person name="Asamizu E."/>
            <person name="Tabata S."/>
        </authorList>
    </citation>
    <scope>NUCLEOTIDE SEQUENCE [LARGE SCALE GENOMIC DNA]</scope>
    <source>
        <strain>cv. Columbia</strain>
    </source>
</reference>
<reference key="2">
    <citation type="journal article" date="2017" name="Plant J.">
        <title>Araport11: a complete reannotation of the Arabidopsis thaliana reference genome.</title>
        <authorList>
            <person name="Cheng C.Y."/>
            <person name="Krishnakumar V."/>
            <person name="Chan A.P."/>
            <person name="Thibaud-Nissen F."/>
            <person name="Schobel S."/>
            <person name="Town C.D."/>
        </authorList>
    </citation>
    <scope>GENOME REANNOTATION</scope>
    <source>
        <strain>cv. Columbia</strain>
    </source>
</reference>
<reference key="3">
    <citation type="journal article" date="2001" name="Plant Physiol.">
        <title>A superfamily of proteins with novel cysteine-rich repeats.</title>
        <authorList>
            <person name="Chen Z."/>
        </authorList>
    </citation>
    <scope>GENE FAMILY ORGANIZATION</scope>
    <scope>NOMENCLATURE</scope>
</reference>
<gene>
    <name type="primary">CRRSP25</name>
    <name type="ordered locus">At3g21965</name>
    <name type="ORF">MZN24.13</name>
</gene>
<accession>Q9LRL2</accession>